<sequence length="346" mass="36879">MDENKKRALAAALGQIERQFGKGAVMRMGDHERQAIPAISTGSLGLDIALGIGGLPKGRIVEIYGPESSGKTTLTLSVIAEAQKQGATCAFVDAEHALDPDYAGKLGVNVDDLLVSQPDTGEQALEITDMLVRSNAVDVIIVDSVAALVPKAEIEGEMGDAHVGLQARLMSQALRKITGNIKNANCLVIFINQIRMKIGVMFGNPETTTGGNALKFYASVRLDIRRTGAVKEGDEVVGSETRVKVVKNKVSPPFRQAEFQILYGKGIYRTGEIIDLGVQLGLVEKSGAWYSYQGSKIGQGKANAAKYLEDNPEIGSVLEKTIRDQLLAKSGPVKADAEEVADAEAD</sequence>
<accession>Q02R89</accession>
<keyword id="KW-0067">ATP-binding</keyword>
<keyword id="KW-0963">Cytoplasm</keyword>
<keyword id="KW-0227">DNA damage</keyword>
<keyword id="KW-0233">DNA recombination</keyword>
<keyword id="KW-0234">DNA repair</keyword>
<keyword id="KW-0238">DNA-binding</keyword>
<keyword id="KW-0547">Nucleotide-binding</keyword>
<keyword id="KW-0742">SOS response</keyword>
<name>RECA_PSEAB</name>
<proteinExistence type="inferred from homology"/>
<dbReference type="EMBL" id="CP000438">
    <property type="protein sequence ID" value="ABJ12850.1"/>
    <property type="molecule type" value="Genomic_DNA"/>
</dbReference>
<dbReference type="RefSeq" id="WP_003092260.1">
    <property type="nucleotide sequence ID" value="NZ_CP034244.1"/>
</dbReference>
<dbReference type="SMR" id="Q02R89"/>
<dbReference type="GeneID" id="77219902"/>
<dbReference type="KEGG" id="pau:PA14_17530"/>
<dbReference type="PseudoCAP" id="PA14_17530"/>
<dbReference type="HOGENOM" id="CLU_040469_3_2_6"/>
<dbReference type="BioCyc" id="PAER208963:G1G74-1445-MONOMER"/>
<dbReference type="Proteomes" id="UP000000653">
    <property type="component" value="Chromosome"/>
</dbReference>
<dbReference type="GO" id="GO:0005829">
    <property type="term" value="C:cytosol"/>
    <property type="evidence" value="ECO:0007669"/>
    <property type="project" value="TreeGrafter"/>
</dbReference>
<dbReference type="GO" id="GO:0005524">
    <property type="term" value="F:ATP binding"/>
    <property type="evidence" value="ECO:0007669"/>
    <property type="project" value="UniProtKB-UniRule"/>
</dbReference>
<dbReference type="GO" id="GO:0016887">
    <property type="term" value="F:ATP hydrolysis activity"/>
    <property type="evidence" value="ECO:0007669"/>
    <property type="project" value="InterPro"/>
</dbReference>
<dbReference type="GO" id="GO:0140664">
    <property type="term" value="F:ATP-dependent DNA damage sensor activity"/>
    <property type="evidence" value="ECO:0007669"/>
    <property type="project" value="InterPro"/>
</dbReference>
<dbReference type="GO" id="GO:0003684">
    <property type="term" value="F:damaged DNA binding"/>
    <property type="evidence" value="ECO:0007669"/>
    <property type="project" value="UniProtKB-UniRule"/>
</dbReference>
<dbReference type="GO" id="GO:0003697">
    <property type="term" value="F:single-stranded DNA binding"/>
    <property type="evidence" value="ECO:0007669"/>
    <property type="project" value="UniProtKB-UniRule"/>
</dbReference>
<dbReference type="GO" id="GO:0006310">
    <property type="term" value="P:DNA recombination"/>
    <property type="evidence" value="ECO:0007669"/>
    <property type="project" value="UniProtKB-UniRule"/>
</dbReference>
<dbReference type="GO" id="GO:0006281">
    <property type="term" value="P:DNA repair"/>
    <property type="evidence" value="ECO:0007669"/>
    <property type="project" value="UniProtKB-UniRule"/>
</dbReference>
<dbReference type="GO" id="GO:0009432">
    <property type="term" value="P:SOS response"/>
    <property type="evidence" value="ECO:0007669"/>
    <property type="project" value="UniProtKB-UniRule"/>
</dbReference>
<dbReference type="CDD" id="cd00983">
    <property type="entry name" value="RecA"/>
    <property type="match status" value="1"/>
</dbReference>
<dbReference type="FunFam" id="3.40.50.300:FF:000087">
    <property type="entry name" value="Recombinase RecA"/>
    <property type="match status" value="1"/>
</dbReference>
<dbReference type="Gene3D" id="3.40.50.300">
    <property type="entry name" value="P-loop containing nucleotide triphosphate hydrolases"/>
    <property type="match status" value="1"/>
</dbReference>
<dbReference type="HAMAP" id="MF_00268">
    <property type="entry name" value="RecA"/>
    <property type="match status" value="1"/>
</dbReference>
<dbReference type="InterPro" id="IPR003593">
    <property type="entry name" value="AAA+_ATPase"/>
</dbReference>
<dbReference type="InterPro" id="IPR013765">
    <property type="entry name" value="DNA_recomb/repair_RecA"/>
</dbReference>
<dbReference type="InterPro" id="IPR020584">
    <property type="entry name" value="DNA_recomb/repair_RecA_CS"/>
</dbReference>
<dbReference type="InterPro" id="IPR027417">
    <property type="entry name" value="P-loop_NTPase"/>
</dbReference>
<dbReference type="InterPro" id="IPR049261">
    <property type="entry name" value="RecA-like_C"/>
</dbReference>
<dbReference type="InterPro" id="IPR049428">
    <property type="entry name" value="RecA-like_N"/>
</dbReference>
<dbReference type="InterPro" id="IPR020588">
    <property type="entry name" value="RecA_ATP-bd"/>
</dbReference>
<dbReference type="InterPro" id="IPR023400">
    <property type="entry name" value="RecA_C_sf"/>
</dbReference>
<dbReference type="InterPro" id="IPR020587">
    <property type="entry name" value="RecA_monomer-monomer_interface"/>
</dbReference>
<dbReference type="NCBIfam" id="TIGR02012">
    <property type="entry name" value="tigrfam_recA"/>
    <property type="match status" value="1"/>
</dbReference>
<dbReference type="PANTHER" id="PTHR45900:SF1">
    <property type="entry name" value="MITOCHONDRIAL DNA REPAIR PROTEIN RECA HOMOLOG-RELATED"/>
    <property type="match status" value="1"/>
</dbReference>
<dbReference type="PANTHER" id="PTHR45900">
    <property type="entry name" value="RECA"/>
    <property type="match status" value="1"/>
</dbReference>
<dbReference type="Pfam" id="PF00154">
    <property type="entry name" value="RecA"/>
    <property type="match status" value="1"/>
</dbReference>
<dbReference type="Pfam" id="PF21096">
    <property type="entry name" value="RecA_C"/>
    <property type="match status" value="1"/>
</dbReference>
<dbReference type="PRINTS" id="PR00142">
    <property type="entry name" value="RECA"/>
</dbReference>
<dbReference type="SMART" id="SM00382">
    <property type="entry name" value="AAA"/>
    <property type="match status" value="1"/>
</dbReference>
<dbReference type="SUPFAM" id="SSF52540">
    <property type="entry name" value="P-loop containing nucleoside triphosphate hydrolases"/>
    <property type="match status" value="1"/>
</dbReference>
<dbReference type="SUPFAM" id="SSF54752">
    <property type="entry name" value="RecA protein, C-terminal domain"/>
    <property type="match status" value="1"/>
</dbReference>
<dbReference type="PROSITE" id="PS00321">
    <property type="entry name" value="RECA_1"/>
    <property type="match status" value="1"/>
</dbReference>
<dbReference type="PROSITE" id="PS50162">
    <property type="entry name" value="RECA_2"/>
    <property type="match status" value="1"/>
</dbReference>
<dbReference type="PROSITE" id="PS50163">
    <property type="entry name" value="RECA_3"/>
    <property type="match status" value="1"/>
</dbReference>
<gene>
    <name evidence="1" type="primary">recA</name>
    <name type="ordered locus">PA14_17530</name>
</gene>
<organism>
    <name type="scientific">Pseudomonas aeruginosa (strain UCBPP-PA14)</name>
    <dbReference type="NCBI Taxonomy" id="208963"/>
    <lineage>
        <taxon>Bacteria</taxon>
        <taxon>Pseudomonadati</taxon>
        <taxon>Pseudomonadota</taxon>
        <taxon>Gammaproteobacteria</taxon>
        <taxon>Pseudomonadales</taxon>
        <taxon>Pseudomonadaceae</taxon>
        <taxon>Pseudomonas</taxon>
    </lineage>
</organism>
<reference key="1">
    <citation type="journal article" date="2006" name="Genome Biol.">
        <title>Genomic analysis reveals that Pseudomonas aeruginosa virulence is combinatorial.</title>
        <authorList>
            <person name="Lee D.G."/>
            <person name="Urbach J.M."/>
            <person name="Wu G."/>
            <person name="Liberati N.T."/>
            <person name="Feinbaum R.L."/>
            <person name="Miyata S."/>
            <person name="Diggins L.T."/>
            <person name="He J."/>
            <person name="Saucier M."/>
            <person name="Deziel E."/>
            <person name="Friedman L."/>
            <person name="Li L."/>
            <person name="Grills G."/>
            <person name="Montgomery K."/>
            <person name="Kucherlapati R."/>
            <person name="Rahme L.G."/>
            <person name="Ausubel F.M."/>
        </authorList>
    </citation>
    <scope>NUCLEOTIDE SEQUENCE [LARGE SCALE GENOMIC DNA]</scope>
    <source>
        <strain>UCBPP-PA14</strain>
    </source>
</reference>
<evidence type="ECO:0000255" key="1">
    <source>
        <dbReference type="HAMAP-Rule" id="MF_00268"/>
    </source>
</evidence>
<protein>
    <recommendedName>
        <fullName evidence="1">Protein RecA</fullName>
    </recommendedName>
    <alternativeName>
        <fullName evidence="1">Recombinase A</fullName>
    </alternativeName>
</protein>
<comment type="function">
    <text evidence="1">Can catalyze the hydrolysis of ATP in the presence of single-stranded DNA, the ATP-dependent uptake of single-stranded DNA by duplex DNA, and the ATP-dependent hybridization of homologous single-stranded DNAs. It interacts with LexA causing its activation and leading to its autocatalytic cleavage.</text>
</comment>
<comment type="subcellular location">
    <subcellularLocation>
        <location evidence="1">Cytoplasm</location>
    </subcellularLocation>
</comment>
<comment type="similarity">
    <text evidence="1">Belongs to the RecA family.</text>
</comment>
<feature type="chain" id="PRO_1000047969" description="Protein RecA">
    <location>
        <begin position="1"/>
        <end position="346"/>
    </location>
</feature>
<feature type="binding site" evidence="1">
    <location>
        <begin position="65"/>
        <end position="72"/>
    </location>
    <ligand>
        <name>ATP</name>
        <dbReference type="ChEBI" id="CHEBI:30616"/>
    </ligand>
</feature>